<proteinExistence type="predicted"/>
<gene>
    <name type="primary">y14D</name>
    <name type="synonym">frd.2</name>
</gene>
<organismHost>
    <name type="scientific">Escherichia coli</name>
    <dbReference type="NCBI Taxonomy" id="562"/>
</organismHost>
<reference key="1">
    <citation type="submission" date="1995-01" db="EMBL/GenBank/DDBJ databases">
        <authorList>
            <person name="Poglazov A.B."/>
            <person name="Mesyanzhinov V.V."/>
            <person name="Kutter E.M."/>
        </authorList>
    </citation>
    <scope>NUCLEOTIDE SEQUENCE [GENOMIC DNA]</scope>
</reference>
<reference key="2">
    <citation type="journal article" date="2003" name="Microbiol. Mol. Biol. Rev.">
        <title>Bacteriophage T4 genome.</title>
        <authorList>
            <person name="Miller E.S."/>
            <person name="Kutter E."/>
            <person name="Mosig G."/>
            <person name="Arisaka F."/>
            <person name="Kunisawa T."/>
            <person name="Ruger W."/>
        </authorList>
    </citation>
    <scope>NUCLEOTIDE SEQUENCE [LARGE SCALE GENOMIC DNA]</scope>
</reference>
<feature type="chain" id="PRO_0000165189" description="Uncharacterized 14.7 kDa protein in frd-Gp32 intergenic region">
    <location>
        <begin position="1"/>
        <end position="128"/>
    </location>
</feature>
<protein>
    <recommendedName>
        <fullName>Uncharacterized 14.7 kDa protein in frd-Gp32 intergenic region</fullName>
    </recommendedName>
</protein>
<organism>
    <name type="scientific">Enterobacteria phage T4</name>
    <name type="common">Bacteriophage T4</name>
    <dbReference type="NCBI Taxonomy" id="10665"/>
    <lineage>
        <taxon>Viruses</taxon>
        <taxon>Duplodnaviria</taxon>
        <taxon>Heunggongvirae</taxon>
        <taxon>Uroviricota</taxon>
        <taxon>Caudoviricetes</taxon>
        <taxon>Straboviridae</taxon>
        <taxon>Tevenvirinae</taxon>
        <taxon>Tequatrovirus</taxon>
    </lineage>
</organism>
<sequence>MEIGKKYELNPHRIKSFIDISSSNASMVGIIQENGGWFEVKSISSLDGFDYVTEIICANGEIYNDDGMGDDYFELSEEEFYCFREYKEPTSEEDEVKDKVSGVTKIHCIVDENNVDEIIELLRKTFKK</sequence>
<dbReference type="EMBL" id="U20859">
    <property type="protein sequence ID" value="AAA62284.1"/>
    <property type="status" value="ALT_INIT"/>
    <property type="molecule type" value="Genomic_DNA"/>
</dbReference>
<dbReference type="EMBL" id="AF158101">
    <property type="protein sequence ID" value="AAD42579.1"/>
    <property type="molecule type" value="Genomic_DNA"/>
</dbReference>
<dbReference type="RefSeq" id="NP_049852.1">
    <property type="nucleotide sequence ID" value="NC_000866.4"/>
</dbReference>
<dbReference type="SMR" id="P39507"/>
<dbReference type="GeneID" id="1258627"/>
<dbReference type="KEGG" id="vg:1258627"/>
<dbReference type="OrthoDB" id="19975at10239"/>
<dbReference type="Proteomes" id="UP000009087">
    <property type="component" value="Segment"/>
</dbReference>
<dbReference type="InterPro" id="IPR004885">
    <property type="entry name" value="FRD2"/>
</dbReference>
<dbReference type="Pfam" id="PF03197">
    <property type="entry name" value="FRD2"/>
    <property type="match status" value="1"/>
</dbReference>
<evidence type="ECO:0000305" key="1"/>
<accession>P39507</accession>
<accession>Q9T0T2</accession>
<comment type="sequence caution" evidence="1">
    <conflict type="erroneous initiation">
        <sequence resource="EMBL-CDS" id="AAA62284"/>
    </conflict>
</comment>
<name>Y14D_BPT4</name>
<keyword id="KW-1185">Reference proteome</keyword>